<keyword id="KW-0067">ATP-binding</keyword>
<keyword id="KW-1003">Cell membrane</keyword>
<keyword id="KW-0963">Cytoplasm</keyword>
<keyword id="KW-0472">Membrane</keyword>
<keyword id="KW-0479">Metal-binding</keyword>
<keyword id="KW-0547">Nucleotide-binding</keyword>
<keyword id="KW-0653">Protein transport</keyword>
<keyword id="KW-1185">Reference proteome</keyword>
<keyword id="KW-1278">Translocase</keyword>
<keyword id="KW-0811">Translocation</keyword>
<keyword id="KW-0813">Transport</keyword>
<keyword id="KW-0862">Zinc</keyword>
<evidence type="ECO:0000255" key="1">
    <source>
        <dbReference type="HAMAP-Rule" id="MF_01382"/>
    </source>
</evidence>
<evidence type="ECO:0000256" key="2">
    <source>
        <dbReference type="SAM" id="MobiDB-lite"/>
    </source>
</evidence>
<evidence type="ECO:0000305" key="3"/>
<protein>
    <recommendedName>
        <fullName evidence="1">Protein translocase subunit SecA</fullName>
        <ecNumber evidence="1">7.4.2.8</ecNumber>
    </recommendedName>
</protein>
<comment type="function">
    <text evidence="1">Part of the Sec protein translocase complex. Interacts with the SecYEG preprotein conducting channel. Has a central role in coupling the hydrolysis of ATP to the transfer of proteins into and across the cell membrane, serving as an ATP-driven molecular motor driving the stepwise translocation of polypeptide chains across the membrane.</text>
</comment>
<comment type="catalytic activity">
    <reaction evidence="1">
        <text>ATP + H2O + cellular proteinSide 1 = ADP + phosphate + cellular proteinSide 2.</text>
        <dbReference type="EC" id="7.4.2.8"/>
    </reaction>
</comment>
<comment type="cofactor">
    <cofactor evidence="1">
        <name>Zn(2+)</name>
        <dbReference type="ChEBI" id="CHEBI:29105"/>
    </cofactor>
    <text evidence="1">May bind 1 zinc ion per subunit.</text>
</comment>
<comment type="subunit">
    <text evidence="1">Monomer and homodimer. Part of the essential Sec protein translocation apparatus which comprises SecA, SecYEG and auxiliary proteins SecDF. Other proteins may also be involved.</text>
</comment>
<comment type="subcellular location">
    <subcellularLocation>
        <location evidence="1">Cell membrane</location>
        <topology evidence="1">Peripheral membrane protein</topology>
        <orientation evidence="1">Cytoplasmic side</orientation>
    </subcellularLocation>
    <subcellularLocation>
        <location evidence="1">Cytoplasm</location>
    </subcellularLocation>
    <text evidence="1">Distribution is 50-50.</text>
</comment>
<comment type="miscellaneous">
    <text>Complements temperature-sensitive (ts) secA mutants in B.subtilis but does not function as well complementing ts mutants in E.coli.</text>
</comment>
<comment type="similarity">
    <text evidence="1">Belongs to the SecA family.</text>
</comment>
<reference key="1">
    <citation type="journal article" date="1995" name="FEMS Microbiol. Lett.">
        <title>Functional characterization of the Staphylococcus carnosus SecA protein in Escherichia coli and Bacillus subtilis secA mutant strains.</title>
        <authorList>
            <person name="Klein M."/>
            <person name="Meens J."/>
            <person name="Freudl R."/>
        </authorList>
    </citation>
    <scope>NUCLEOTIDE SEQUENCE [GENOMIC DNA]</scope>
    <scope>CHARACTERIZATION OF COMPLEMENTATION IN E.COLI AND B.SUBTILIS</scope>
</reference>
<reference key="2">
    <citation type="journal article" date="2009" name="Appl. Environ. Microbiol.">
        <title>Genome analysis of the meat starter culture bacterium Staphylococcus carnosus TM300.</title>
        <authorList>
            <person name="Rosenstein R."/>
            <person name="Nerz C."/>
            <person name="Biswas L."/>
            <person name="Resch A."/>
            <person name="Raddatz G."/>
            <person name="Schuster S.C."/>
            <person name="Goetz F."/>
        </authorList>
    </citation>
    <scope>NUCLEOTIDE SEQUENCE [LARGE SCALE GENOMIC DNA]</scope>
    <source>
        <strain>TM300</strain>
    </source>
</reference>
<sequence length="842" mass="96056">MGFLTKIVDGNKREIKRLSKQADKVISLEEEMSILTDEEIRNKTKAFQERLQAEEDVSKQDKILEEILPEAFALVREGAKRVFNMTPYPVQIMGGIAIHNGDISEMRTGEGKTLTATMPTYLNALAGRGVHVITVNEYLASSQSEEMAELYNFLGLSVGLNLNSLSTEQKREAYNADITYSTNNELGFDYLRDNMVNYSEERVMRPLHFAIIDEVDSILIDEARTPLIISGEAEKSTSLYTQANVFAKMLKAEDDYNYDEKTKSVQLTDQGADKAERMFKLDNLYDLKNVDIITHINTALRANYTLQRDVDYMVVDGEVLIVDQFTGRTMPGRRFSEGLHQAIEAKEGVQIQNESKTMASITFQNYFRMYNKLAGMTGTAKTEEEEFRNIYNMTVTQIPTNRPVQREDRPDLIFISQKGKFDAVVEDVVEKHKKGQPILLGTVAVETSEYISQLLKKRGVRHDVLNAKNHEREAEIVSTAGQKGAVTIATNMAGRGTDIKLGEGVEELGGLAVIGTERHESRRIDDQLRGRSGRQGDRGESRFYLSLQDELMVRFGSERLQKMMGRLGMDDSTPIESKMVSRAVESAQKRVEGNNFDARKRILEYDEVLRKQREIIYGERNNIIDSESSSELVITMIRSTLDRAISYYVNEELEEIDYAPFINFVEDVFLHEGEVKEDEIKGKDREDIFDTVWAKIEKAYEAQKANIPDQFNEFERMILLRSIDGRWTDHIDTMDQLRQGIHLRSYGQQNPLRDYQNEGHQLFDTMMVNIEEDVSKYILKSIITVDDDIERDKAKEYQGQHVSAEDGKEKVKPQPVVKDNHIGRNDPCPCGSGKKYKNCCGK</sequence>
<name>SECA_STACT</name>
<accession>P47994</accession>
<accession>B9DJM2</accession>
<proteinExistence type="evidence at protein level"/>
<gene>
    <name evidence="1" type="primary">secA</name>
    <name type="ordered locus">Sca_0401</name>
</gene>
<feature type="chain" id="PRO_0000109609" description="Protein translocase subunit SecA">
    <location>
        <begin position="1"/>
        <end position="842"/>
    </location>
</feature>
<feature type="region of interest" description="Disordered" evidence="2">
    <location>
        <begin position="798"/>
        <end position="827"/>
    </location>
</feature>
<feature type="compositionally biased region" description="Basic and acidic residues" evidence="2">
    <location>
        <begin position="798"/>
        <end position="824"/>
    </location>
</feature>
<feature type="binding site" evidence="1">
    <location>
        <position position="91"/>
    </location>
    <ligand>
        <name>ATP</name>
        <dbReference type="ChEBI" id="CHEBI:30616"/>
    </ligand>
</feature>
<feature type="binding site" evidence="1">
    <location>
        <begin position="109"/>
        <end position="113"/>
    </location>
    <ligand>
        <name>ATP</name>
        <dbReference type="ChEBI" id="CHEBI:30616"/>
    </ligand>
</feature>
<feature type="binding site" evidence="1">
    <location>
        <position position="498"/>
    </location>
    <ligand>
        <name>ATP</name>
        <dbReference type="ChEBI" id="CHEBI:30616"/>
    </ligand>
</feature>
<feature type="binding site" evidence="1">
    <location>
        <position position="828"/>
    </location>
    <ligand>
        <name>Zn(2+)</name>
        <dbReference type="ChEBI" id="CHEBI:29105"/>
    </ligand>
</feature>
<feature type="binding site" evidence="1">
    <location>
        <position position="830"/>
    </location>
    <ligand>
        <name>Zn(2+)</name>
        <dbReference type="ChEBI" id="CHEBI:29105"/>
    </ligand>
</feature>
<feature type="binding site" evidence="1">
    <location>
        <position position="839"/>
    </location>
    <ligand>
        <name>Zn(2+)</name>
        <dbReference type="ChEBI" id="CHEBI:29105"/>
    </ligand>
</feature>
<feature type="binding site" evidence="1">
    <location>
        <position position="840"/>
    </location>
    <ligand>
        <name>Zn(2+)</name>
        <dbReference type="ChEBI" id="CHEBI:29105"/>
    </ligand>
</feature>
<feature type="sequence conflict" description="In Ref. 1; CAA56162." evidence="3" ref="1">
    <original>G</original>
    <variation>A</variation>
    <location>
        <position position="127"/>
    </location>
</feature>
<feature type="sequence conflict" description="In Ref. 1; CAA56162." evidence="3" ref="1">
    <original>S</original>
    <variation>R</variation>
    <location>
        <position position="144"/>
    </location>
</feature>
<feature type="sequence conflict" description="In Ref. 1; CAA56162." evidence="3" ref="1">
    <original>K</original>
    <variation>KGK</variation>
    <location>
        <position position="683"/>
    </location>
</feature>
<organism>
    <name type="scientific">Staphylococcus carnosus (strain TM300)</name>
    <dbReference type="NCBI Taxonomy" id="396513"/>
    <lineage>
        <taxon>Bacteria</taxon>
        <taxon>Bacillati</taxon>
        <taxon>Bacillota</taxon>
        <taxon>Bacilli</taxon>
        <taxon>Bacillales</taxon>
        <taxon>Staphylococcaceae</taxon>
        <taxon>Staphylococcus</taxon>
    </lineage>
</organism>
<dbReference type="EC" id="7.4.2.8" evidence="1"/>
<dbReference type="EMBL" id="X79725">
    <property type="protein sequence ID" value="CAA56162.1"/>
    <property type="molecule type" value="Genomic_DNA"/>
</dbReference>
<dbReference type="EMBL" id="AM295250">
    <property type="protein sequence ID" value="CAL27315.1"/>
    <property type="molecule type" value="Genomic_DNA"/>
</dbReference>
<dbReference type="PIR" id="S47149">
    <property type="entry name" value="S47149"/>
</dbReference>
<dbReference type="RefSeq" id="WP_015899660.1">
    <property type="nucleotide sequence ID" value="NC_012121.1"/>
</dbReference>
<dbReference type="SMR" id="P47994"/>
<dbReference type="GeneID" id="93795331"/>
<dbReference type="KEGG" id="sca:SCA_0401"/>
<dbReference type="eggNOG" id="COG0653">
    <property type="taxonomic scope" value="Bacteria"/>
</dbReference>
<dbReference type="HOGENOM" id="CLU_005314_3_0_9"/>
<dbReference type="OrthoDB" id="9805579at2"/>
<dbReference type="BioCyc" id="SCAR396513:SCA_RS02045-MONOMER"/>
<dbReference type="Proteomes" id="UP000000444">
    <property type="component" value="Chromosome"/>
</dbReference>
<dbReference type="GO" id="GO:0031522">
    <property type="term" value="C:cell envelope Sec protein transport complex"/>
    <property type="evidence" value="ECO:0007669"/>
    <property type="project" value="TreeGrafter"/>
</dbReference>
<dbReference type="GO" id="GO:0005829">
    <property type="term" value="C:cytosol"/>
    <property type="evidence" value="ECO:0007669"/>
    <property type="project" value="TreeGrafter"/>
</dbReference>
<dbReference type="GO" id="GO:0005886">
    <property type="term" value="C:plasma membrane"/>
    <property type="evidence" value="ECO:0007669"/>
    <property type="project" value="UniProtKB-SubCell"/>
</dbReference>
<dbReference type="GO" id="GO:0005524">
    <property type="term" value="F:ATP binding"/>
    <property type="evidence" value="ECO:0007669"/>
    <property type="project" value="UniProtKB-UniRule"/>
</dbReference>
<dbReference type="GO" id="GO:0046872">
    <property type="term" value="F:metal ion binding"/>
    <property type="evidence" value="ECO:0007669"/>
    <property type="project" value="UniProtKB-KW"/>
</dbReference>
<dbReference type="GO" id="GO:0008564">
    <property type="term" value="F:protein-exporting ATPase activity"/>
    <property type="evidence" value="ECO:0007669"/>
    <property type="project" value="UniProtKB-EC"/>
</dbReference>
<dbReference type="GO" id="GO:0065002">
    <property type="term" value="P:intracellular protein transmembrane transport"/>
    <property type="evidence" value="ECO:0007669"/>
    <property type="project" value="UniProtKB-UniRule"/>
</dbReference>
<dbReference type="GO" id="GO:0017038">
    <property type="term" value="P:protein import"/>
    <property type="evidence" value="ECO:0007669"/>
    <property type="project" value="InterPro"/>
</dbReference>
<dbReference type="GO" id="GO:0006605">
    <property type="term" value="P:protein targeting"/>
    <property type="evidence" value="ECO:0007669"/>
    <property type="project" value="UniProtKB-UniRule"/>
</dbReference>
<dbReference type="GO" id="GO:0043952">
    <property type="term" value="P:protein transport by the Sec complex"/>
    <property type="evidence" value="ECO:0007669"/>
    <property type="project" value="TreeGrafter"/>
</dbReference>
<dbReference type="CDD" id="cd17928">
    <property type="entry name" value="DEXDc_SecA"/>
    <property type="match status" value="1"/>
</dbReference>
<dbReference type="CDD" id="cd18803">
    <property type="entry name" value="SF2_C_secA"/>
    <property type="match status" value="1"/>
</dbReference>
<dbReference type="FunFam" id="3.40.50.300:FF:000694">
    <property type="entry name" value="Preprotein translocase subunit SecA"/>
    <property type="match status" value="1"/>
</dbReference>
<dbReference type="FunFam" id="3.90.1440.10:FF:000001">
    <property type="entry name" value="Preprotein translocase subunit SecA"/>
    <property type="match status" value="1"/>
</dbReference>
<dbReference type="Gene3D" id="1.10.3060.10">
    <property type="entry name" value="Helical scaffold and wing domains of SecA"/>
    <property type="match status" value="1"/>
</dbReference>
<dbReference type="Gene3D" id="3.40.50.300">
    <property type="entry name" value="P-loop containing nucleotide triphosphate hydrolases"/>
    <property type="match status" value="2"/>
</dbReference>
<dbReference type="Gene3D" id="3.90.1440.10">
    <property type="entry name" value="SecA, preprotein cross-linking domain"/>
    <property type="match status" value="1"/>
</dbReference>
<dbReference type="HAMAP" id="MF_01382">
    <property type="entry name" value="SecA"/>
    <property type="match status" value="1"/>
</dbReference>
<dbReference type="InterPro" id="IPR014001">
    <property type="entry name" value="Helicase_ATP-bd"/>
</dbReference>
<dbReference type="InterPro" id="IPR001650">
    <property type="entry name" value="Helicase_C-like"/>
</dbReference>
<dbReference type="InterPro" id="IPR027417">
    <property type="entry name" value="P-loop_NTPase"/>
</dbReference>
<dbReference type="InterPro" id="IPR004027">
    <property type="entry name" value="SEC_C_motif"/>
</dbReference>
<dbReference type="InterPro" id="IPR000185">
    <property type="entry name" value="SecA"/>
</dbReference>
<dbReference type="InterPro" id="IPR020937">
    <property type="entry name" value="SecA_CS"/>
</dbReference>
<dbReference type="InterPro" id="IPR011115">
    <property type="entry name" value="SecA_DEAD"/>
</dbReference>
<dbReference type="InterPro" id="IPR014018">
    <property type="entry name" value="SecA_motor_DEAD"/>
</dbReference>
<dbReference type="InterPro" id="IPR011130">
    <property type="entry name" value="SecA_preprotein_X-link_dom"/>
</dbReference>
<dbReference type="InterPro" id="IPR044722">
    <property type="entry name" value="SecA_SF2_C"/>
</dbReference>
<dbReference type="InterPro" id="IPR011116">
    <property type="entry name" value="SecA_Wing/Scaffold"/>
</dbReference>
<dbReference type="InterPro" id="IPR036266">
    <property type="entry name" value="SecA_Wing/Scaffold_sf"/>
</dbReference>
<dbReference type="InterPro" id="IPR036670">
    <property type="entry name" value="SecA_X-link_sf"/>
</dbReference>
<dbReference type="NCBIfam" id="NF006630">
    <property type="entry name" value="PRK09200.1"/>
    <property type="match status" value="1"/>
</dbReference>
<dbReference type="NCBIfam" id="NF009538">
    <property type="entry name" value="PRK12904.1"/>
    <property type="match status" value="1"/>
</dbReference>
<dbReference type="NCBIfam" id="TIGR00963">
    <property type="entry name" value="secA"/>
    <property type="match status" value="1"/>
</dbReference>
<dbReference type="PANTHER" id="PTHR30612:SF0">
    <property type="entry name" value="CHLOROPLAST PROTEIN-TRANSPORTING ATPASE"/>
    <property type="match status" value="1"/>
</dbReference>
<dbReference type="PANTHER" id="PTHR30612">
    <property type="entry name" value="SECA INNER MEMBRANE COMPONENT OF SEC PROTEIN SECRETION SYSTEM"/>
    <property type="match status" value="1"/>
</dbReference>
<dbReference type="Pfam" id="PF21090">
    <property type="entry name" value="P-loop_SecA"/>
    <property type="match status" value="1"/>
</dbReference>
<dbReference type="Pfam" id="PF02810">
    <property type="entry name" value="SEC-C"/>
    <property type="match status" value="1"/>
</dbReference>
<dbReference type="Pfam" id="PF07517">
    <property type="entry name" value="SecA_DEAD"/>
    <property type="match status" value="1"/>
</dbReference>
<dbReference type="Pfam" id="PF01043">
    <property type="entry name" value="SecA_PP_bind"/>
    <property type="match status" value="1"/>
</dbReference>
<dbReference type="Pfam" id="PF07516">
    <property type="entry name" value="SecA_SW"/>
    <property type="match status" value="1"/>
</dbReference>
<dbReference type="PRINTS" id="PR00906">
    <property type="entry name" value="SECA"/>
</dbReference>
<dbReference type="SMART" id="SM00957">
    <property type="entry name" value="SecA_DEAD"/>
    <property type="match status" value="1"/>
</dbReference>
<dbReference type="SMART" id="SM00958">
    <property type="entry name" value="SecA_PP_bind"/>
    <property type="match status" value="1"/>
</dbReference>
<dbReference type="SUPFAM" id="SSF81886">
    <property type="entry name" value="Helical scaffold and wing domains of SecA"/>
    <property type="match status" value="1"/>
</dbReference>
<dbReference type="SUPFAM" id="SSF52540">
    <property type="entry name" value="P-loop containing nucleoside triphosphate hydrolases"/>
    <property type="match status" value="2"/>
</dbReference>
<dbReference type="SUPFAM" id="SSF81767">
    <property type="entry name" value="Pre-protein crosslinking domain of SecA"/>
    <property type="match status" value="1"/>
</dbReference>
<dbReference type="PROSITE" id="PS01312">
    <property type="entry name" value="SECA"/>
    <property type="match status" value="1"/>
</dbReference>
<dbReference type="PROSITE" id="PS51196">
    <property type="entry name" value="SECA_MOTOR_DEAD"/>
    <property type="match status" value="1"/>
</dbReference>